<organism>
    <name type="scientific">Streptococcus equi subsp. zooepidemicus (strain H70)</name>
    <dbReference type="NCBI Taxonomy" id="553483"/>
    <lineage>
        <taxon>Bacteria</taxon>
        <taxon>Bacillati</taxon>
        <taxon>Bacillota</taxon>
        <taxon>Bacilli</taxon>
        <taxon>Lactobacillales</taxon>
        <taxon>Streptococcaceae</taxon>
        <taxon>Streptococcus</taxon>
    </lineage>
</organism>
<feature type="chain" id="PRO_1000203254" description="Bifunctional purine biosynthesis protein PurH">
    <location>
        <begin position="1"/>
        <end position="515"/>
    </location>
</feature>
<feature type="domain" description="MGS-like" evidence="2">
    <location>
        <begin position="1"/>
        <end position="145"/>
    </location>
</feature>
<sequence length="515" mass="56190">MTKRALISVSDKRGIVDLARELKHLGWDIISTGGTRLALEEAGVVTVAIDDVTGFPEMMDGRVKTLHPLIHGGLLARRDIEHHLQAAKQNRIELIDLVVVNLYPFKETICRSDITYDVAVDMVDIGGPSLLRSAAKNHASVTVVVDPTDYPLVLGELASTGSTSYQTRQSLAAKAFRHTAAYDAVIADYFTRQAGETKPEKLTLTYDLKQSMRYGENPQQAADFYQRALPITYSIASAKQLNGKELSFNNIRDADAAIRIIRDFKERPTVVALKHMNPCGIGQADDIETAWDFAYAADPVSIFGGIVVLNREVDLATAEKLHAIFLELIIAPSYSKEALAVLTHKKKHLRILELPFAAQEASEIEAEYTGVLGGLLVQNQDVVTESPADWIVVTKRQPNEQEMAALAFAWKTIKYVKSNAIIIANDHMTLGVGPGQTNRIASVRIAIAQATGQLEGAVLASDAFFPFADSIEEIAAAGIKAIIQPGGSIRDSESIAAADQHGITMIFTGVRHFRH</sequence>
<keyword id="KW-0378">Hydrolase</keyword>
<keyword id="KW-0511">Multifunctional enzyme</keyword>
<keyword id="KW-0658">Purine biosynthesis</keyword>
<keyword id="KW-0808">Transferase</keyword>
<accession>C0MC89</accession>
<name>PUR9_STRS7</name>
<evidence type="ECO:0000255" key="1">
    <source>
        <dbReference type="HAMAP-Rule" id="MF_00139"/>
    </source>
</evidence>
<evidence type="ECO:0000255" key="2">
    <source>
        <dbReference type="PROSITE-ProRule" id="PRU01202"/>
    </source>
</evidence>
<dbReference type="EC" id="2.1.2.3" evidence="1"/>
<dbReference type="EC" id="3.5.4.10" evidence="1"/>
<dbReference type="EMBL" id="FM204884">
    <property type="protein sequence ID" value="CAW97607.1"/>
    <property type="molecule type" value="Genomic_DNA"/>
</dbReference>
<dbReference type="SMR" id="C0MC89"/>
<dbReference type="KEGG" id="seq:SZO_00300"/>
<dbReference type="PATRIC" id="fig|40041.11.peg.29"/>
<dbReference type="eggNOG" id="COG0138">
    <property type="taxonomic scope" value="Bacteria"/>
</dbReference>
<dbReference type="HOGENOM" id="CLU_016316_5_2_9"/>
<dbReference type="UniPathway" id="UPA00074">
    <property type="reaction ID" value="UER00133"/>
</dbReference>
<dbReference type="UniPathway" id="UPA00074">
    <property type="reaction ID" value="UER00135"/>
</dbReference>
<dbReference type="Proteomes" id="UP000001368">
    <property type="component" value="Chromosome"/>
</dbReference>
<dbReference type="GO" id="GO:0005829">
    <property type="term" value="C:cytosol"/>
    <property type="evidence" value="ECO:0007669"/>
    <property type="project" value="TreeGrafter"/>
</dbReference>
<dbReference type="GO" id="GO:0003937">
    <property type="term" value="F:IMP cyclohydrolase activity"/>
    <property type="evidence" value="ECO:0007669"/>
    <property type="project" value="UniProtKB-UniRule"/>
</dbReference>
<dbReference type="GO" id="GO:0004643">
    <property type="term" value="F:phosphoribosylaminoimidazolecarboxamide formyltransferase activity"/>
    <property type="evidence" value="ECO:0007669"/>
    <property type="project" value="UniProtKB-UniRule"/>
</dbReference>
<dbReference type="GO" id="GO:0006189">
    <property type="term" value="P:'de novo' IMP biosynthetic process"/>
    <property type="evidence" value="ECO:0007669"/>
    <property type="project" value="UniProtKB-UniRule"/>
</dbReference>
<dbReference type="CDD" id="cd01421">
    <property type="entry name" value="IMPCH"/>
    <property type="match status" value="1"/>
</dbReference>
<dbReference type="FunFam" id="3.40.140.20:FF:000001">
    <property type="entry name" value="Bifunctional purine biosynthesis protein PurH"/>
    <property type="match status" value="1"/>
</dbReference>
<dbReference type="FunFam" id="3.40.140.20:FF:000002">
    <property type="entry name" value="Bifunctional purine biosynthesis protein PurH"/>
    <property type="match status" value="1"/>
</dbReference>
<dbReference type="FunFam" id="3.40.50.1380:FF:000001">
    <property type="entry name" value="Bifunctional purine biosynthesis protein PurH"/>
    <property type="match status" value="1"/>
</dbReference>
<dbReference type="Gene3D" id="3.40.140.20">
    <property type="match status" value="2"/>
</dbReference>
<dbReference type="Gene3D" id="3.40.50.1380">
    <property type="entry name" value="Methylglyoxal synthase-like domain"/>
    <property type="match status" value="1"/>
</dbReference>
<dbReference type="HAMAP" id="MF_00139">
    <property type="entry name" value="PurH"/>
    <property type="match status" value="1"/>
</dbReference>
<dbReference type="InterPro" id="IPR024051">
    <property type="entry name" value="AICAR_Tfase_dup_dom_sf"/>
</dbReference>
<dbReference type="InterPro" id="IPR016193">
    <property type="entry name" value="Cytidine_deaminase-like"/>
</dbReference>
<dbReference type="InterPro" id="IPR011607">
    <property type="entry name" value="MGS-like_dom"/>
</dbReference>
<dbReference type="InterPro" id="IPR036914">
    <property type="entry name" value="MGS-like_dom_sf"/>
</dbReference>
<dbReference type="InterPro" id="IPR002695">
    <property type="entry name" value="PurH-like"/>
</dbReference>
<dbReference type="NCBIfam" id="NF002049">
    <property type="entry name" value="PRK00881.1"/>
    <property type="match status" value="1"/>
</dbReference>
<dbReference type="NCBIfam" id="TIGR00355">
    <property type="entry name" value="purH"/>
    <property type="match status" value="1"/>
</dbReference>
<dbReference type="PANTHER" id="PTHR11692:SF0">
    <property type="entry name" value="BIFUNCTIONAL PURINE BIOSYNTHESIS PROTEIN ATIC"/>
    <property type="match status" value="1"/>
</dbReference>
<dbReference type="PANTHER" id="PTHR11692">
    <property type="entry name" value="BIFUNCTIONAL PURINE BIOSYNTHESIS PROTEIN PURH"/>
    <property type="match status" value="1"/>
</dbReference>
<dbReference type="Pfam" id="PF01808">
    <property type="entry name" value="AICARFT_IMPCHas"/>
    <property type="match status" value="1"/>
</dbReference>
<dbReference type="Pfam" id="PF02142">
    <property type="entry name" value="MGS"/>
    <property type="match status" value="1"/>
</dbReference>
<dbReference type="PIRSF" id="PIRSF000414">
    <property type="entry name" value="AICARFT_IMPCHas"/>
    <property type="match status" value="1"/>
</dbReference>
<dbReference type="SMART" id="SM00798">
    <property type="entry name" value="AICARFT_IMPCHas"/>
    <property type="match status" value="1"/>
</dbReference>
<dbReference type="SMART" id="SM00851">
    <property type="entry name" value="MGS"/>
    <property type="match status" value="1"/>
</dbReference>
<dbReference type="SUPFAM" id="SSF53927">
    <property type="entry name" value="Cytidine deaminase-like"/>
    <property type="match status" value="1"/>
</dbReference>
<dbReference type="SUPFAM" id="SSF52335">
    <property type="entry name" value="Methylglyoxal synthase-like"/>
    <property type="match status" value="1"/>
</dbReference>
<dbReference type="PROSITE" id="PS51855">
    <property type="entry name" value="MGS"/>
    <property type="match status" value="1"/>
</dbReference>
<gene>
    <name evidence="1" type="primary">purH</name>
    <name type="ordered locus">SZO_00300</name>
</gene>
<protein>
    <recommendedName>
        <fullName evidence="1">Bifunctional purine biosynthesis protein PurH</fullName>
    </recommendedName>
    <domain>
        <recommendedName>
            <fullName evidence="1">Phosphoribosylaminoimidazolecarboxamide formyltransferase</fullName>
            <ecNumber evidence="1">2.1.2.3</ecNumber>
        </recommendedName>
        <alternativeName>
            <fullName evidence="1">AICAR transformylase</fullName>
        </alternativeName>
    </domain>
    <domain>
        <recommendedName>
            <fullName evidence="1">IMP cyclohydrolase</fullName>
            <ecNumber evidence="1">3.5.4.10</ecNumber>
        </recommendedName>
        <alternativeName>
            <fullName evidence="1">ATIC</fullName>
        </alternativeName>
        <alternativeName>
            <fullName evidence="1">IMP synthase</fullName>
        </alternativeName>
        <alternativeName>
            <fullName evidence="1">Inosinicase</fullName>
        </alternativeName>
    </domain>
</protein>
<proteinExistence type="inferred from homology"/>
<comment type="catalytic activity">
    <reaction evidence="1">
        <text>(6R)-10-formyltetrahydrofolate + 5-amino-1-(5-phospho-beta-D-ribosyl)imidazole-4-carboxamide = 5-formamido-1-(5-phospho-D-ribosyl)imidazole-4-carboxamide + (6S)-5,6,7,8-tetrahydrofolate</text>
        <dbReference type="Rhea" id="RHEA:22192"/>
        <dbReference type="ChEBI" id="CHEBI:57453"/>
        <dbReference type="ChEBI" id="CHEBI:58467"/>
        <dbReference type="ChEBI" id="CHEBI:58475"/>
        <dbReference type="ChEBI" id="CHEBI:195366"/>
        <dbReference type="EC" id="2.1.2.3"/>
    </reaction>
</comment>
<comment type="catalytic activity">
    <reaction evidence="1">
        <text>IMP + H2O = 5-formamido-1-(5-phospho-D-ribosyl)imidazole-4-carboxamide</text>
        <dbReference type="Rhea" id="RHEA:18445"/>
        <dbReference type="ChEBI" id="CHEBI:15377"/>
        <dbReference type="ChEBI" id="CHEBI:58053"/>
        <dbReference type="ChEBI" id="CHEBI:58467"/>
        <dbReference type="EC" id="3.5.4.10"/>
    </reaction>
</comment>
<comment type="pathway">
    <text evidence="1">Purine metabolism; IMP biosynthesis via de novo pathway; 5-formamido-1-(5-phospho-D-ribosyl)imidazole-4-carboxamide from 5-amino-1-(5-phospho-D-ribosyl)imidazole-4-carboxamide (10-formyl THF route): step 1/1.</text>
</comment>
<comment type="pathway">
    <text evidence="1">Purine metabolism; IMP biosynthesis via de novo pathway; IMP from 5-formamido-1-(5-phospho-D-ribosyl)imidazole-4-carboxamide: step 1/1.</text>
</comment>
<comment type="domain">
    <text evidence="1">The IMP cyclohydrolase activity resides in the N-terminal region.</text>
</comment>
<comment type="similarity">
    <text evidence="1">Belongs to the PurH family.</text>
</comment>
<reference key="1">
    <citation type="journal article" date="2009" name="PLoS Pathog.">
        <title>Genomic evidence for the evolution of Streptococcus equi: host restriction, increased virulence, and genetic exchange with human pathogens.</title>
        <authorList>
            <person name="Holden M.T.G."/>
            <person name="Heather Z."/>
            <person name="Paillot R."/>
            <person name="Steward K.F."/>
            <person name="Webb K."/>
            <person name="Ainslie F."/>
            <person name="Jourdan T."/>
            <person name="Bason N.C."/>
            <person name="Holroyd N.E."/>
            <person name="Mungall K."/>
            <person name="Quail M.A."/>
            <person name="Sanders M."/>
            <person name="Simmonds M."/>
            <person name="Willey D."/>
            <person name="Brooks K."/>
            <person name="Aanensen D.M."/>
            <person name="Spratt B.G."/>
            <person name="Jolley K.A."/>
            <person name="Maiden M.C.J."/>
            <person name="Kehoe M."/>
            <person name="Chanter N."/>
            <person name="Bentley S.D."/>
            <person name="Robinson C."/>
            <person name="Maskell D.J."/>
            <person name="Parkhill J."/>
            <person name="Waller A.S."/>
        </authorList>
    </citation>
    <scope>NUCLEOTIDE SEQUENCE [LARGE SCALE GENOMIC DNA]</scope>
    <source>
        <strain>H70</strain>
    </source>
</reference>